<evidence type="ECO:0000255" key="1">
    <source>
        <dbReference type="HAMAP-Rule" id="MF_01200"/>
    </source>
</evidence>
<keyword id="KW-0210">Decarboxylase</keyword>
<keyword id="KW-0456">Lyase</keyword>
<keyword id="KW-0665">Pyrimidine biosynthesis</keyword>
<feature type="chain" id="PRO_1000138521" description="Orotidine 5'-phosphate decarboxylase">
    <location>
        <begin position="1"/>
        <end position="250"/>
    </location>
</feature>
<feature type="active site" description="Proton donor" evidence="1">
    <location>
        <position position="69"/>
    </location>
</feature>
<feature type="binding site" evidence="1">
    <location>
        <position position="9"/>
    </location>
    <ligand>
        <name>substrate</name>
    </ligand>
</feature>
<feature type="binding site" evidence="1">
    <location>
        <position position="40"/>
    </location>
    <ligand>
        <name>substrate</name>
    </ligand>
</feature>
<feature type="binding site" evidence="1">
    <location>
        <begin position="67"/>
        <end position="76"/>
    </location>
    <ligand>
        <name>substrate</name>
    </ligand>
</feature>
<feature type="binding site" evidence="1">
    <location>
        <position position="132"/>
    </location>
    <ligand>
        <name>substrate</name>
    </ligand>
</feature>
<feature type="binding site" evidence="1">
    <location>
        <position position="190"/>
    </location>
    <ligand>
        <name>substrate</name>
    </ligand>
</feature>
<feature type="binding site" evidence="1">
    <location>
        <position position="204"/>
    </location>
    <ligand>
        <name>substrate</name>
    </ligand>
</feature>
<feature type="binding site" evidence="1">
    <location>
        <position position="224"/>
    </location>
    <ligand>
        <name>substrate</name>
    </ligand>
</feature>
<feature type="binding site" evidence="1">
    <location>
        <position position="225"/>
    </location>
    <ligand>
        <name>substrate</name>
    </ligand>
</feature>
<organism>
    <name type="scientific">Nitratidesulfovibrio vulgaris (strain DSM 19637 / Miyazaki F)</name>
    <name type="common">Desulfovibrio vulgaris</name>
    <dbReference type="NCBI Taxonomy" id="883"/>
    <lineage>
        <taxon>Bacteria</taxon>
        <taxon>Pseudomonadati</taxon>
        <taxon>Thermodesulfobacteriota</taxon>
        <taxon>Desulfovibrionia</taxon>
        <taxon>Desulfovibrionales</taxon>
        <taxon>Desulfovibrionaceae</taxon>
        <taxon>Nitratidesulfovibrio</taxon>
    </lineage>
</organism>
<protein>
    <recommendedName>
        <fullName evidence="1">Orotidine 5'-phosphate decarboxylase</fullName>
        <ecNumber evidence="1">4.1.1.23</ecNumber>
    </recommendedName>
    <alternativeName>
        <fullName evidence="1">OMP decarboxylase</fullName>
        <shortName evidence="1">OMPDCase</shortName>
        <shortName evidence="1">OMPdecase</shortName>
    </alternativeName>
</protein>
<dbReference type="EC" id="4.1.1.23" evidence="1"/>
<dbReference type="EMBL" id="CP001197">
    <property type="protein sequence ID" value="ACL08091.1"/>
    <property type="molecule type" value="Genomic_DNA"/>
</dbReference>
<dbReference type="SMR" id="B8DKC9"/>
<dbReference type="STRING" id="883.DvMF_1137"/>
<dbReference type="KEGG" id="dvm:DvMF_1137"/>
<dbReference type="eggNOG" id="COG0284">
    <property type="taxonomic scope" value="Bacteria"/>
</dbReference>
<dbReference type="HOGENOM" id="CLU_067069_1_0_7"/>
<dbReference type="OrthoDB" id="9806203at2"/>
<dbReference type="UniPathway" id="UPA00070">
    <property type="reaction ID" value="UER00120"/>
</dbReference>
<dbReference type="GO" id="GO:0005829">
    <property type="term" value="C:cytosol"/>
    <property type="evidence" value="ECO:0007669"/>
    <property type="project" value="TreeGrafter"/>
</dbReference>
<dbReference type="GO" id="GO:0004590">
    <property type="term" value="F:orotidine-5'-phosphate decarboxylase activity"/>
    <property type="evidence" value="ECO:0007669"/>
    <property type="project" value="UniProtKB-UniRule"/>
</dbReference>
<dbReference type="GO" id="GO:0006207">
    <property type="term" value="P:'de novo' pyrimidine nucleobase biosynthetic process"/>
    <property type="evidence" value="ECO:0007669"/>
    <property type="project" value="InterPro"/>
</dbReference>
<dbReference type="GO" id="GO:0044205">
    <property type="term" value="P:'de novo' UMP biosynthetic process"/>
    <property type="evidence" value="ECO:0007669"/>
    <property type="project" value="UniProtKB-UniRule"/>
</dbReference>
<dbReference type="CDD" id="cd04725">
    <property type="entry name" value="OMP_decarboxylase_like"/>
    <property type="match status" value="1"/>
</dbReference>
<dbReference type="Gene3D" id="3.20.20.70">
    <property type="entry name" value="Aldolase class I"/>
    <property type="match status" value="1"/>
</dbReference>
<dbReference type="HAMAP" id="MF_01200_B">
    <property type="entry name" value="OMPdecase_type1_B"/>
    <property type="match status" value="1"/>
</dbReference>
<dbReference type="InterPro" id="IPR013785">
    <property type="entry name" value="Aldolase_TIM"/>
</dbReference>
<dbReference type="InterPro" id="IPR014732">
    <property type="entry name" value="OMPdecase"/>
</dbReference>
<dbReference type="InterPro" id="IPR018089">
    <property type="entry name" value="OMPdecase_AS"/>
</dbReference>
<dbReference type="InterPro" id="IPR047596">
    <property type="entry name" value="OMPdecase_bac"/>
</dbReference>
<dbReference type="InterPro" id="IPR001754">
    <property type="entry name" value="OMPdeCOase_dom"/>
</dbReference>
<dbReference type="InterPro" id="IPR011060">
    <property type="entry name" value="RibuloseP-bd_barrel"/>
</dbReference>
<dbReference type="NCBIfam" id="NF001273">
    <property type="entry name" value="PRK00230.1"/>
    <property type="match status" value="1"/>
</dbReference>
<dbReference type="NCBIfam" id="TIGR01740">
    <property type="entry name" value="pyrF"/>
    <property type="match status" value="1"/>
</dbReference>
<dbReference type="PANTHER" id="PTHR32119">
    <property type="entry name" value="OROTIDINE 5'-PHOSPHATE DECARBOXYLASE"/>
    <property type="match status" value="1"/>
</dbReference>
<dbReference type="PANTHER" id="PTHR32119:SF2">
    <property type="entry name" value="OROTIDINE 5'-PHOSPHATE DECARBOXYLASE"/>
    <property type="match status" value="1"/>
</dbReference>
<dbReference type="Pfam" id="PF00215">
    <property type="entry name" value="OMPdecase"/>
    <property type="match status" value="1"/>
</dbReference>
<dbReference type="SMART" id="SM00934">
    <property type="entry name" value="OMPdecase"/>
    <property type="match status" value="1"/>
</dbReference>
<dbReference type="SUPFAM" id="SSF51366">
    <property type="entry name" value="Ribulose-phoshate binding barrel"/>
    <property type="match status" value="1"/>
</dbReference>
<dbReference type="PROSITE" id="PS00156">
    <property type="entry name" value="OMPDECASE"/>
    <property type="match status" value="1"/>
</dbReference>
<comment type="function">
    <text evidence="1">Catalyzes the decarboxylation of orotidine 5'-monophosphate (OMP) to uridine 5'-monophosphate (UMP).</text>
</comment>
<comment type="catalytic activity">
    <reaction evidence="1">
        <text>orotidine 5'-phosphate + H(+) = UMP + CO2</text>
        <dbReference type="Rhea" id="RHEA:11596"/>
        <dbReference type="ChEBI" id="CHEBI:15378"/>
        <dbReference type="ChEBI" id="CHEBI:16526"/>
        <dbReference type="ChEBI" id="CHEBI:57538"/>
        <dbReference type="ChEBI" id="CHEBI:57865"/>
        <dbReference type="EC" id="4.1.1.23"/>
    </reaction>
</comment>
<comment type="pathway">
    <text evidence="1">Pyrimidine metabolism; UMP biosynthesis via de novo pathway; UMP from orotate: step 2/2.</text>
</comment>
<comment type="subunit">
    <text evidence="1">Homodimer.</text>
</comment>
<comment type="similarity">
    <text evidence="1">Belongs to the OMP decarboxylase family. Type 1 subfamily.</text>
</comment>
<name>PYRF_NITV9</name>
<proteinExistence type="inferred from homology"/>
<accession>B8DKC9</accession>
<reference key="1">
    <citation type="submission" date="2008-10" db="EMBL/GenBank/DDBJ databases">
        <title>Complete sequence of Desulfovibrio vulgaris str. 'Miyazaki F'.</title>
        <authorList>
            <person name="Lucas S."/>
            <person name="Copeland A."/>
            <person name="Lapidus A."/>
            <person name="Glavina del Rio T."/>
            <person name="Dalin E."/>
            <person name="Tice H."/>
            <person name="Bruce D."/>
            <person name="Goodwin L."/>
            <person name="Pitluck S."/>
            <person name="Sims D."/>
            <person name="Brettin T."/>
            <person name="Detter J.C."/>
            <person name="Han C."/>
            <person name="Larimer F."/>
            <person name="Land M."/>
            <person name="Hauser L."/>
            <person name="Kyrpides N."/>
            <person name="Mikhailova N."/>
            <person name="Hazen T.C."/>
            <person name="Richardson P."/>
        </authorList>
    </citation>
    <scope>NUCLEOTIDE SEQUENCE [LARGE SCALE GENOMIC DNA]</scope>
    <source>
        <strain>DSM 19637 / Miyazaki F</strain>
    </source>
</reference>
<gene>
    <name evidence="1" type="primary">pyrF</name>
    <name type="ordered locus">DvMF_1137</name>
</gene>
<sequence length="250" mass="25514">MAELVIALDYPTMDAALATARALRGATDTAGDAGGRLWMKVGLELFTASGPEVVARLKDMGFPVFLDLKFHDIPNTVRGAVRSAVATGADMCNIHLPGGERMCRAAVEGLAEGAAARGHGAAPILLGVTVLTSVAPGELPGGADPSAEAARLAVCGREWGLGGVVCSGYEAAGIKQRCGRDFICLTPGIRPAAPQRSGSGDDDQRRVMTPAEAVRAGSDYLVVGRPVTGAAGPDGPAEAARRILAEMRGA</sequence>